<sequence length="727" mass="78370">MPHIYKQPLGIFQGFVPTLTDAEVSFIAQRQLLTLPENGELPDDIEYEVDLKVTFANHRLKRAYIALQAWKKAVYSDPFNTTGNWHGPHVCGYTGVFCAPALDDPDVAVVAGVDLNGADIAGHLPAELGLMTDVAMFHLNSNRFCGIIPKSFEKLSLMHEFDVSNNRFVGPFPSVVLSWPAVKFIDVRYNDFEGQVPPELFKKDLDAIFLNNNRFTSTIPDSLGESSASVVTFAHNKFSGCIPRSIGNMKNLNEIIFKDNSLGGCFPSEIGKLANVNVFDASMNSFTGVLPPSFVGLTSMEEFDISGNKLTGFIPENICKLPKLVNLTYAYNYFNGQGDSCVPGSQKQIALDDTRNCLPDRPKQRSAKECAVVISRPVDCSKDKCAGGSSQATPSKSPSPVPTRPVHKPQPPKESPQPNDPYNQSPVKFRRSPPPPQQPHHHVVHSPPPASSPPTSPPVHSTPSPVHKPQPPKESPQPNDPYDQSPVKFRRSPPPPPVHSPPPPSPIHSPPPPPVYSPPPPPPVYSPPPPPPVYSPPPPPPVHSPPPPVHSPPPPVHSPPPPVHSPPPPVHSPPPPVHSPPPPVYSPPPPPVHSPPPPVHSPPPPVHSPPPPVYSPPPPPPVHSPPPPVFSPPPPVHSPPPPVYSPPPPVYSPPPPPVKSPPPPPVYSPPLLPPKMSSPPTQTPVNSPPPRTPSQTVEAPPPSEEFIIPPFIGHQYASPPPPMFQGY</sequence>
<dbReference type="EMBL" id="AC006438">
    <property type="protein sequence ID" value="AAD41978.1"/>
    <property type="molecule type" value="Genomic_DNA"/>
</dbReference>
<dbReference type="EMBL" id="CP002685">
    <property type="protein sequence ID" value="AEC06443.1"/>
    <property type="molecule type" value="Genomic_DNA"/>
</dbReference>
<dbReference type="PIR" id="C84534">
    <property type="entry name" value="C84534"/>
</dbReference>
<dbReference type="RefSeq" id="NP_179188.1">
    <property type="nucleotide sequence ID" value="NM_127148.2"/>
</dbReference>
<dbReference type="SMR" id="Q9XIL9"/>
<dbReference type="FunCoup" id="Q9XIL9">
    <property type="interactions" value="116"/>
</dbReference>
<dbReference type="STRING" id="3702.Q9XIL9"/>
<dbReference type="TCDB" id="3.A.20.1.2">
    <property type="family name" value="the peroxisomal protein importer (ppi) family"/>
</dbReference>
<dbReference type="GlyCosmos" id="Q9XIL9">
    <property type="glycosylation" value="2 sites, No reported glycans"/>
</dbReference>
<dbReference type="GlyGen" id="Q9XIL9">
    <property type="glycosylation" value="3 sites"/>
</dbReference>
<dbReference type="PaxDb" id="3702-AT2G15880.1"/>
<dbReference type="ProteomicsDB" id="234731"/>
<dbReference type="EnsemblPlants" id="AT2G15880.1">
    <property type="protein sequence ID" value="AT2G15880.1"/>
    <property type="gene ID" value="AT2G15880"/>
</dbReference>
<dbReference type="GeneID" id="816084"/>
<dbReference type="Gramene" id="AT2G15880.1">
    <property type="protein sequence ID" value="AT2G15880.1"/>
    <property type="gene ID" value="AT2G15880"/>
</dbReference>
<dbReference type="KEGG" id="ath:AT2G15880"/>
<dbReference type="Araport" id="AT2G15880"/>
<dbReference type="TAIR" id="AT2G15880">
    <property type="gene designation" value="LRX10"/>
</dbReference>
<dbReference type="eggNOG" id="ENOG502QRPA">
    <property type="taxonomic scope" value="Eukaryota"/>
</dbReference>
<dbReference type="HOGENOM" id="CLU_000288_23_3_1"/>
<dbReference type="InParanoid" id="Q9XIL9"/>
<dbReference type="OMA" id="DHYEFEV"/>
<dbReference type="PhylomeDB" id="Q9XIL9"/>
<dbReference type="PRO" id="PR:Q9XIL9"/>
<dbReference type="Proteomes" id="UP000006548">
    <property type="component" value="Chromosome 2"/>
</dbReference>
<dbReference type="ExpressionAtlas" id="Q9XIL9">
    <property type="expression patterns" value="baseline and differential"/>
</dbReference>
<dbReference type="GO" id="GO:0005576">
    <property type="term" value="C:extracellular region"/>
    <property type="evidence" value="ECO:0007669"/>
    <property type="project" value="UniProtKB-KW"/>
</dbReference>
<dbReference type="GO" id="GO:0005199">
    <property type="term" value="F:structural constituent of cell wall"/>
    <property type="evidence" value="ECO:0000250"/>
    <property type="project" value="TAIR"/>
</dbReference>
<dbReference type="GO" id="GO:0071555">
    <property type="term" value="P:cell wall organization"/>
    <property type="evidence" value="ECO:0007669"/>
    <property type="project" value="UniProtKB-KW"/>
</dbReference>
<dbReference type="FunFam" id="3.80.10.10:FF:000742">
    <property type="entry name" value="Pollen-specific leucine-rich repeat extensin-like protein 1"/>
    <property type="match status" value="1"/>
</dbReference>
<dbReference type="Gene3D" id="3.80.10.10">
    <property type="entry name" value="Ribonuclease Inhibitor"/>
    <property type="match status" value="1"/>
</dbReference>
<dbReference type="InterPro" id="IPR001611">
    <property type="entry name" value="Leu-rich_rpt"/>
</dbReference>
<dbReference type="InterPro" id="IPR032675">
    <property type="entry name" value="LRR_dom_sf"/>
</dbReference>
<dbReference type="InterPro" id="IPR051582">
    <property type="entry name" value="LRR_extensin-like_regulator"/>
</dbReference>
<dbReference type="PANTHER" id="PTHR32093">
    <property type="entry name" value="LEUCINE-RICH REPEAT EXTENSIN-LIKE PROTEIN 3-RELATED"/>
    <property type="match status" value="1"/>
</dbReference>
<dbReference type="PANTHER" id="PTHR32093:SF157">
    <property type="entry name" value="POLLEN-SPECIFIC LEUCINE-RICH REPEAT EXTENSIN-LIKE PROTEIN 3"/>
    <property type="match status" value="1"/>
</dbReference>
<dbReference type="Pfam" id="PF00560">
    <property type="entry name" value="LRR_1"/>
    <property type="match status" value="1"/>
</dbReference>
<dbReference type="PRINTS" id="PR01217">
    <property type="entry name" value="PRICHEXTENSN"/>
</dbReference>
<dbReference type="SUPFAM" id="SSF52058">
    <property type="entry name" value="L domain-like"/>
    <property type="match status" value="1"/>
</dbReference>
<evidence type="ECO:0000250" key="1"/>
<evidence type="ECO:0000255" key="2"/>
<evidence type="ECO:0000256" key="3">
    <source>
        <dbReference type="SAM" id="MobiDB-lite"/>
    </source>
</evidence>
<evidence type="ECO:0000269" key="4">
    <source>
    </source>
</evidence>
<proteinExistence type="evidence at transcript level"/>
<gene>
    <name type="primary">PEX3</name>
    <name type="ordered locus">At2g15880</name>
    <name type="ORF">F19G14.12</name>
</gene>
<protein>
    <recommendedName>
        <fullName>Pollen-specific leucine-rich repeat extensin-like protein 3</fullName>
        <shortName>AtPEX3</shortName>
        <shortName>Pollen-specific LRR/EXTENSIN3</shortName>
    </recommendedName>
    <alternativeName>
        <fullName>Cell wall hydroxyproline-rich glycoprotein</fullName>
    </alternativeName>
</protein>
<organism>
    <name type="scientific">Arabidopsis thaliana</name>
    <name type="common">Mouse-ear cress</name>
    <dbReference type="NCBI Taxonomy" id="3702"/>
    <lineage>
        <taxon>Eukaryota</taxon>
        <taxon>Viridiplantae</taxon>
        <taxon>Streptophyta</taxon>
        <taxon>Embryophyta</taxon>
        <taxon>Tracheophyta</taxon>
        <taxon>Spermatophyta</taxon>
        <taxon>Magnoliopsida</taxon>
        <taxon>eudicotyledons</taxon>
        <taxon>Gunneridae</taxon>
        <taxon>Pentapetalae</taxon>
        <taxon>rosids</taxon>
        <taxon>malvids</taxon>
        <taxon>Brassicales</taxon>
        <taxon>Brassicaceae</taxon>
        <taxon>Camelineae</taxon>
        <taxon>Arabidopsis</taxon>
    </lineage>
</organism>
<keyword id="KW-0134">Cell wall</keyword>
<keyword id="KW-0961">Cell wall biogenesis/degradation</keyword>
<keyword id="KW-0325">Glycoprotein</keyword>
<keyword id="KW-0379">Hydroxylation</keyword>
<keyword id="KW-0433">Leucine-rich repeat</keyword>
<keyword id="KW-1185">Reference proteome</keyword>
<keyword id="KW-0677">Repeat</keyword>
<keyword id="KW-0964">Secreted</keyword>
<keyword id="KW-0732">Signal</keyword>
<accession>Q9XIL9</accession>
<reference key="1">
    <citation type="journal article" date="1999" name="Nature">
        <title>Sequence and analysis of chromosome 2 of the plant Arabidopsis thaliana.</title>
        <authorList>
            <person name="Lin X."/>
            <person name="Kaul S."/>
            <person name="Rounsley S.D."/>
            <person name="Shea T.P."/>
            <person name="Benito M.-I."/>
            <person name="Town C.D."/>
            <person name="Fujii C.Y."/>
            <person name="Mason T.M."/>
            <person name="Bowman C.L."/>
            <person name="Barnstead M.E."/>
            <person name="Feldblyum T.V."/>
            <person name="Buell C.R."/>
            <person name="Ketchum K.A."/>
            <person name="Lee J.J."/>
            <person name="Ronning C.M."/>
            <person name="Koo H.L."/>
            <person name="Moffat K.S."/>
            <person name="Cronin L.A."/>
            <person name="Shen M."/>
            <person name="Pai G."/>
            <person name="Van Aken S."/>
            <person name="Umayam L."/>
            <person name="Tallon L.J."/>
            <person name="Gill J.E."/>
            <person name="Adams M.D."/>
            <person name="Carrera A.J."/>
            <person name="Creasy T.H."/>
            <person name="Goodman H.M."/>
            <person name="Somerville C.R."/>
            <person name="Copenhaver G.P."/>
            <person name="Preuss D."/>
            <person name="Nierman W.C."/>
            <person name="White O."/>
            <person name="Eisen J.A."/>
            <person name="Salzberg S.L."/>
            <person name="Fraser C.M."/>
            <person name="Venter J.C."/>
        </authorList>
    </citation>
    <scope>NUCLEOTIDE SEQUENCE [LARGE SCALE GENOMIC DNA]</scope>
    <source>
        <strain>cv. Columbia</strain>
    </source>
</reference>
<reference key="2">
    <citation type="journal article" date="2017" name="Plant J.">
        <title>Araport11: a complete reannotation of the Arabidopsis thaliana reference genome.</title>
        <authorList>
            <person name="Cheng C.Y."/>
            <person name="Krishnakumar V."/>
            <person name="Chan A.P."/>
            <person name="Thibaud-Nissen F."/>
            <person name="Schobel S."/>
            <person name="Town C.D."/>
        </authorList>
    </citation>
    <scope>GENOME REANNOTATION</scope>
    <source>
        <strain>cv. Columbia</strain>
    </source>
</reference>
<reference key="3">
    <citation type="journal article" date="2003" name="Plant Physiol.">
        <title>Whole-genome comparison of leucine-rich repeat extensins in Arabidopsis and rice. A conserved family of cell wall proteins form a vegetative and a reproductive clade.</title>
        <authorList>
            <person name="Baumberger N."/>
            <person name="Doesseger B."/>
            <person name="Guyot R."/>
            <person name="Diet A."/>
            <person name="Parsons R.L."/>
            <person name="Clark M.A."/>
            <person name="Simmons M.P."/>
            <person name="Bedinger P."/>
            <person name="Goff S.A."/>
            <person name="Ringli C."/>
            <person name="Keller B."/>
        </authorList>
    </citation>
    <scope>TISSUE SPECIFICITY</scope>
    <scope>GENE FAMILY</scope>
    <scope>NOMENCLATURE</scope>
</reference>
<feature type="signal peptide" evidence="2">
    <location>
        <begin position="1"/>
        <end position="22"/>
    </location>
</feature>
<feature type="chain" id="PRO_0000395470" description="Pollen-specific leucine-rich repeat extensin-like protein 3">
    <location>
        <begin position="23"/>
        <end position="727"/>
    </location>
</feature>
<feature type="repeat" description="LRR 1">
    <location>
        <begin position="19"/>
        <end position="43"/>
    </location>
</feature>
<feature type="repeat" description="LRR 2">
    <location>
        <begin position="107"/>
        <end position="131"/>
    </location>
</feature>
<feature type="repeat" description="LRR 3">
    <location>
        <begin position="132"/>
        <end position="154"/>
    </location>
</feature>
<feature type="repeat" description="LRR 4">
    <location>
        <begin position="156"/>
        <end position="179"/>
    </location>
</feature>
<feature type="repeat" description="LRR 5">
    <location>
        <begin position="180"/>
        <end position="202"/>
    </location>
</feature>
<feature type="repeat" description="LRR 6">
    <location>
        <begin position="203"/>
        <end position="226"/>
    </location>
</feature>
<feature type="repeat" description="LRR 7">
    <location>
        <begin position="228"/>
        <end position="249"/>
    </location>
</feature>
<feature type="repeat" description="LRR 8">
    <location>
        <begin position="250"/>
        <end position="273"/>
    </location>
</feature>
<feature type="repeat" description="LRR 9">
    <location>
        <begin position="275"/>
        <end position="296"/>
    </location>
</feature>
<feature type="repeat" description="LRR 10">
    <location>
        <begin position="297"/>
        <end position="321"/>
    </location>
</feature>
<feature type="region of interest" description="Disordered" evidence="3">
    <location>
        <begin position="381"/>
        <end position="727"/>
    </location>
</feature>
<feature type="region of interest" description="Contains the Ser-Pro(4) repeats">
    <location>
        <begin position="432"/>
        <end position="727"/>
    </location>
</feature>
<feature type="compositionally biased region" description="Pro residues" evidence="3">
    <location>
        <begin position="397"/>
        <end position="419"/>
    </location>
</feature>
<feature type="compositionally biased region" description="Pro residues" evidence="3">
    <location>
        <begin position="446"/>
        <end position="457"/>
    </location>
</feature>
<feature type="compositionally biased region" description="Pro residues" evidence="3">
    <location>
        <begin position="466"/>
        <end position="479"/>
    </location>
</feature>
<feature type="compositionally biased region" description="Pro residues" evidence="3">
    <location>
        <begin position="492"/>
        <end position="677"/>
    </location>
</feature>
<feature type="compositionally biased region" description="Pro residues" evidence="3">
    <location>
        <begin position="718"/>
        <end position="727"/>
    </location>
</feature>
<feature type="glycosylation site" description="N-linked (GlcNAc...) asparagine" evidence="2">
    <location>
        <position position="80"/>
    </location>
</feature>
<feature type="glycosylation site" description="N-linked (GlcNAc...) asparagine" evidence="2">
    <location>
        <position position="326"/>
    </location>
</feature>
<name>PLRX3_ARATH</name>
<comment type="function">
    <text evidence="1">Modulates cell morphogenesis by regulating cell wall formation and assembly, and/or growth polarization.</text>
</comment>
<comment type="subcellular location">
    <subcellularLocation>
        <location evidence="1">Secreted</location>
        <location evidence="1">Cell wall</location>
    </subcellularLocation>
</comment>
<comment type="tissue specificity">
    <text evidence="4">Expressed in flowers, stamen, pollen, and pollinated carpels.</text>
</comment>
<comment type="PTM">
    <text evidence="1">Hydroxylated on proline residues in the S-P-P-P-P repeat.</text>
</comment>
<comment type="PTM">
    <text evidence="1">O-glycosylated on hydroxyprolines.</text>
</comment>